<dbReference type="EC" id="3.5.1.18" evidence="1"/>
<dbReference type="EMBL" id="AM040265">
    <property type="protein sequence ID" value="CAJ13159.1"/>
    <property type="molecule type" value="Genomic_DNA"/>
</dbReference>
<dbReference type="RefSeq" id="WP_002967376.1">
    <property type="nucleotide sequence ID" value="NZ_KN046823.1"/>
</dbReference>
<dbReference type="SMR" id="Q2YJQ6"/>
<dbReference type="STRING" id="359391.BAB2_0993"/>
<dbReference type="GeneID" id="93015186"/>
<dbReference type="KEGG" id="bmf:BAB2_0993"/>
<dbReference type="PATRIC" id="fig|359391.11.peg.680"/>
<dbReference type="HOGENOM" id="CLU_021802_4_0_5"/>
<dbReference type="PhylomeDB" id="Q2YJQ6"/>
<dbReference type="UniPathway" id="UPA00034">
    <property type="reaction ID" value="UER00021"/>
</dbReference>
<dbReference type="Proteomes" id="UP000002719">
    <property type="component" value="Chromosome II"/>
</dbReference>
<dbReference type="GO" id="GO:0008777">
    <property type="term" value="F:acetylornithine deacetylase activity"/>
    <property type="evidence" value="ECO:0007669"/>
    <property type="project" value="TreeGrafter"/>
</dbReference>
<dbReference type="GO" id="GO:0050897">
    <property type="term" value="F:cobalt ion binding"/>
    <property type="evidence" value="ECO:0007669"/>
    <property type="project" value="UniProtKB-UniRule"/>
</dbReference>
<dbReference type="GO" id="GO:0009014">
    <property type="term" value="F:succinyl-diaminopimelate desuccinylase activity"/>
    <property type="evidence" value="ECO:0007669"/>
    <property type="project" value="UniProtKB-UniRule"/>
</dbReference>
<dbReference type="GO" id="GO:0008270">
    <property type="term" value="F:zinc ion binding"/>
    <property type="evidence" value="ECO:0007669"/>
    <property type="project" value="UniProtKB-UniRule"/>
</dbReference>
<dbReference type="GO" id="GO:0019877">
    <property type="term" value="P:diaminopimelate biosynthetic process"/>
    <property type="evidence" value="ECO:0007669"/>
    <property type="project" value="UniProtKB-UniRule"/>
</dbReference>
<dbReference type="GO" id="GO:0006526">
    <property type="term" value="P:L-arginine biosynthetic process"/>
    <property type="evidence" value="ECO:0007669"/>
    <property type="project" value="TreeGrafter"/>
</dbReference>
<dbReference type="GO" id="GO:0009089">
    <property type="term" value="P:lysine biosynthetic process via diaminopimelate"/>
    <property type="evidence" value="ECO:0007669"/>
    <property type="project" value="UniProtKB-UniRule"/>
</dbReference>
<dbReference type="CDD" id="cd03891">
    <property type="entry name" value="M20_DapE_proteobac"/>
    <property type="match status" value="1"/>
</dbReference>
<dbReference type="Gene3D" id="3.30.70.360">
    <property type="match status" value="1"/>
</dbReference>
<dbReference type="Gene3D" id="3.40.630.10">
    <property type="entry name" value="Zn peptidases"/>
    <property type="match status" value="2"/>
</dbReference>
<dbReference type="HAMAP" id="MF_01690">
    <property type="entry name" value="DapE"/>
    <property type="match status" value="1"/>
</dbReference>
<dbReference type="InterPro" id="IPR001261">
    <property type="entry name" value="ArgE/DapE_CS"/>
</dbReference>
<dbReference type="InterPro" id="IPR036264">
    <property type="entry name" value="Bact_exopeptidase_dim_dom"/>
</dbReference>
<dbReference type="InterPro" id="IPR005941">
    <property type="entry name" value="DapE_proteobac"/>
</dbReference>
<dbReference type="InterPro" id="IPR002933">
    <property type="entry name" value="Peptidase_M20"/>
</dbReference>
<dbReference type="InterPro" id="IPR011650">
    <property type="entry name" value="Peptidase_M20_dimer"/>
</dbReference>
<dbReference type="InterPro" id="IPR050072">
    <property type="entry name" value="Peptidase_M20A"/>
</dbReference>
<dbReference type="NCBIfam" id="TIGR01246">
    <property type="entry name" value="dapE_proteo"/>
    <property type="match status" value="1"/>
</dbReference>
<dbReference type="NCBIfam" id="NF009557">
    <property type="entry name" value="PRK13009.1"/>
    <property type="match status" value="1"/>
</dbReference>
<dbReference type="PANTHER" id="PTHR43808">
    <property type="entry name" value="ACETYLORNITHINE DEACETYLASE"/>
    <property type="match status" value="1"/>
</dbReference>
<dbReference type="PANTHER" id="PTHR43808:SF31">
    <property type="entry name" value="N-ACETYL-L-CITRULLINE DEACETYLASE"/>
    <property type="match status" value="1"/>
</dbReference>
<dbReference type="Pfam" id="PF07687">
    <property type="entry name" value="M20_dimer"/>
    <property type="match status" value="1"/>
</dbReference>
<dbReference type="Pfam" id="PF01546">
    <property type="entry name" value="Peptidase_M20"/>
    <property type="match status" value="1"/>
</dbReference>
<dbReference type="SUPFAM" id="SSF55031">
    <property type="entry name" value="Bacterial exopeptidase dimerisation domain"/>
    <property type="match status" value="1"/>
</dbReference>
<dbReference type="SUPFAM" id="SSF53187">
    <property type="entry name" value="Zn-dependent exopeptidases"/>
    <property type="match status" value="1"/>
</dbReference>
<dbReference type="PROSITE" id="PS00758">
    <property type="entry name" value="ARGE_DAPE_CPG2_1"/>
    <property type="match status" value="1"/>
</dbReference>
<dbReference type="PROSITE" id="PS00759">
    <property type="entry name" value="ARGE_DAPE_CPG2_2"/>
    <property type="match status" value="1"/>
</dbReference>
<protein>
    <recommendedName>
        <fullName evidence="1">Succinyl-diaminopimelate desuccinylase</fullName>
        <shortName evidence="1">SDAP desuccinylase</shortName>
        <ecNumber evidence="1">3.5.1.18</ecNumber>
    </recommendedName>
    <alternativeName>
        <fullName evidence="1">N-succinyl-LL-2,6-diaminoheptanedioate amidohydrolase</fullName>
    </alternativeName>
</protein>
<proteinExistence type="inferred from homology"/>
<name>DAPE_BRUA2</name>
<feature type="chain" id="PRO_0000375485" description="Succinyl-diaminopimelate desuccinylase">
    <location>
        <begin position="1"/>
        <end position="395"/>
    </location>
</feature>
<feature type="active site" evidence="1">
    <location>
        <position position="76"/>
    </location>
</feature>
<feature type="active site" description="Proton acceptor" evidence="1">
    <location>
        <position position="141"/>
    </location>
</feature>
<feature type="binding site" evidence="1">
    <location>
        <position position="74"/>
    </location>
    <ligand>
        <name>Zn(2+)</name>
        <dbReference type="ChEBI" id="CHEBI:29105"/>
        <label>1</label>
    </ligand>
</feature>
<feature type="binding site" evidence="1">
    <location>
        <position position="107"/>
    </location>
    <ligand>
        <name>Zn(2+)</name>
        <dbReference type="ChEBI" id="CHEBI:29105"/>
        <label>1</label>
    </ligand>
</feature>
<feature type="binding site" evidence="1">
    <location>
        <position position="107"/>
    </location>
    <ligand>
        <name>Zn(2+)</name>
        <dbReference type="ChEBI" id="CHEBI:29105"/>
        <label>2</label>
    </ligand>
</feature>
<feature type="binding site" evidence="1">
    <location>
        <position position="142"/>
    </location>
    <ligand>
        <name>Zn(2+)</name>
        <dbReference type="ChEBI" id="CHEBI:29105"/>
        <label>2</label>
    </ligand>
</feature>
<feature type="binding site" evidence="1">
    <location>
        <position position="170"/>
    </location>
    <ligand>
        <name>Zn(2+)</name>
        <dbReference type="ChEBI" id="CHEBI:29105"/>
        <label>1</label>
    </ligand>
</feature>
<feature type="binding site" evidence="1">
    <location>
        <position position="368"/>
    </location>
    <ligand>
        <name>Zn(2+)</name>
        <dbReference type="ChEBI" id="CHEBI:29105"/>
        <label>2</label>
    </ligand>
</feature>
<evidence type="ECO:0000255" key="1">
    <source>
        <dbReference type="HAMAP-Rule" id="MF_01690"/>
    </source>
</evidence>
<keyword id="KW-0028">Amino-acid biosynthesis</keyword>
<keyword id="KW-0170">Cobalt</keyword>
<keyword id="KW-0220">Diaminopimelate biosynthesis</keyword>
<keyword id="KW-0378">Hydrolase</keyword>
<keyword id="KW-0457">Lysine biosynthesis</keyword>
<keyword id="KW-0479">Metal-binding</keyword>
<keyword id="KW-1185">Reference proteome</keyword>
<keyword id="KW-0862">Zinc</keyword>
<organism>
    <name type="scientific">Brucella abortus (strain 2308)</name>
    <dbReference type="NCBI Taxonomy" id="359391"/>
    <lineage>
        <taxon>Bacteria</taxon>
        <taxon>Pseudomonadati</taxon>
        <taxon>Pseudomonadota</taxon>
        <taxon>Alphaproteobacteria</taxon>
        <taxon>Hyphomicrobiales</taxon>
        <taxon>Brucellaceae</taxon>
        <taxon>Brucella/Ochrobactrum group</taxon>
        <taxon>Brucella</taxon>
    </lineage>
</organism>
<sequence length="395" mass="42895">MTLPVNPVDNLAALIRCPSVTPAEGGALTALEKMLKLMGFSANRPVFSDDNTPDIENLYARKSGNGPHLMFAGHTDVVPPGDEKDWKHPPFAAEIEDGVMYGRGAVDMKGGIACFVAAVARHIEKHGNIKGSISFLITGDEEGPAVNGTVKLLEWAKQRGESWDASIVGEPTNPNALGDMIKIGRRGSLSGTITVHGVQGHAAYPHLAENPVRGIVTLVDSLLYPAFDEGTANFQASNLEVTTIDVGNKATNVIPNKATASFNIRFNDTWTAESLQAEIISRLERAARDNRLRQGRETPIKYELTWRERPSHVFLTHDEKLIGTLTASVEAVTGKRPELSTSGGTSDARFIKDYCPVVEFGLTGQTMHMVDERVALADLEGLTQIYERFIADFFG</sequence>
<reference key="1">
    <citation type="journal article" date="2005" name="Infect. Immun.">
        <title>Whole-genome analyses of speciation events in pathogenic Brucellae.</title>
        <authorList>
            <person name="Chain P.S."/>
            <person name="Comerci D.J."/>
            <person name="Tolmasky M.E."/>
            <person name="Larimer F.W."/>
            <person name="Malfatti S.A."/>
            <person name="Vergez L.M."/>
            <person name="Aguero F."/>
            <person name="Land M.L."/>
            <person name="Ugalde R.A."/>
            <person name="Garcia E."/>
        </authorList>
    </citation>
    <scope>NUCLEOTIDE SEQUENCE [LARGE SCALE GENOMIC DNA]</scope>
    <source>
        <strain>2308</strain>
    </source>
</reference>
<gene>
    <name evidence="1" type="primary">dapE</name>
    <name type="ordered locus">BAB2_0993</name>
</gene>
<comment type="function">
    <text evidence="1">Catalyzes the hydrolysis of N-succinyl-L,L-diaminopimelic acid (SDAP), forming succinate and LL-2,6-diaminopimelate (DAP), an intermediate involved in the bacterial biosynthesis of lysine and meso-diaminopimelic acid, an essential component of bacterial cell walls.</text>
</comment>
<comment type="catalytic activity">
    <reaction evidence="1">
        <text>N-succinyl-(2S,6S)-2,6-diaminopimelate + H2O = (2S,6S)-2,6-diaminopimelate + succinate</text>
        <dbReference type="Rhea" id="RHEA:22608"/>
        <dbReference type="ChEBI" id="CHEBI:15377"/>
        <dbReference type="ChEBI" id="CHEBI:30031"/>
        <dbReference type="ChEBI" id="CHEBI:57609"/>
        <dbReference type="ChEBI" id="CHEBI:58087"/>
        <dbReference type="EC" id="3.5.1.18"/>
    </reaction>
</comment>
<comment type="cofactor">
    <cofactor evidence="1">
        <name>Zn(2+)</name>
        <dbReference type="ChEBI" id="CHEBI:29105"/>
    </cofactor>
    <cofactor evidence="1">
        <name>Co(2+)</name>
        <dbReference type="ChEBI" id="CHEBI:48828"/>
    </cofactor>
    <text evidence="1">Binds 2 Zn(2+) or Co(2+) ions per subunit.</text>
</comment>
<comment type="pathway">
    <text evidence="1">Amino-acid biosynthesis; L-lysine biosynthesis via DAP pathway; LL-2,6-diaminopimelate from (S)-tetrahydrodipicolinate (succinylase route): step 3/3.</text>
</comment>
<comment type="subunit">
    <text evidence="1">Homodimer.</text>
</comment>
<comment type="similarity">
    <text evidence="1">Belongs to the peptidase M20A family. DapE subfamily.</text>
</comment>
<accession>Q2YJQ6</accession>